<keyword id="KW-0274">FAD</keyword>
<keyword id="KW-0285">Flavoprotein</keyword>
<keyword id="KW-0325">Glycoprotein</keyword>
<keyword id="KW-0560">Oxidoreductase</keyword>
<keyword id="KW-1185">Reference proteome</keyword>
<keyword id="KW-0732">Signal</keyword>
<keyword id="KW-0926">Vacuole</keyword>
<accession>A0A075TR33</accession>
<accession>A0A0A2JB48</accession>
<dbReference type="EC" id="1.-.-.-" evidence="15"/>
<dbReference type="EMBL" id="KF899892">
    <property type="protein sequence ID" value="AIG62142.1"/>
    <property type="molecule type" value="Genomic_DNA"/>
</dbReference>
<dbReference type="EMBL" id="JQFZ01000262">
    <property type="protein sequence ID" value="KGO52637.1"/>
    <property type="status" value="ALT_INIT"/>
    <property type="molecule type" value="Genomic_DNA"/>
</dbReference>
<dbReference type="RefSeq" id="XP_016595367.1">
    <property type="nucleotide sequence ID" value="XM_016745554.1"/>
</dbReference>
<dbReference type="SMR" id="A0A075TR33"/>
<dbReference type="STRING" id="27334.A0A075TR33"/>
<dbReference type="GlyCosmos" id="A0A075TR33">
    <property type="glycosylation" value="10 sites, No reported glycans"/>
</dbReference>
<dbReference type="GeneID" id="27680974"/>
<dbReference type="VEuPathDB" id="FungiDB:PEXP_094420"/>
<dbReference type="HOGENOM" id="CLU_018354_4_2_1"/>
<dbReference type="OrthoDB" id="9983560at2759"/>
<dbReference type="BioCyc" id="MetaCyc:MONOMER-21163"/>
<dbReference type="UniPathway" id="UPA00918"/>
<dbReference type="Proteomes" id="UP000030143">
    <property type="component" value="Unassembled WGS sequence"/>
</dbReference>
<dbReference type="GO" id="GO:0000328">
    <property type="term" value="C:fungal-type vacuole lumen"/>
    <property type="evidence" value="ECO:0000314"/>
    <property type="project" value="UniProt"/>
</dbReference>
<dbReference type="GO" id="GO:0005773">
    <property type="term" value="C:vacuole"/>
    <property type="evidence" value="ECO:0000314"/>
    <property type="project" value="GO_Central"/>
</dbReference>
<dbReference type="GO" id="GO:0071949">
    <property type="term" value="F:FAD binding"/>
    <property type="evidence" value="ECO:0007669"/>
    <property type="project" value="InterPro"/>
</dbReference>
<dbReference type="GO" id="GO:0016491">
    <property type="term" value="F:oxidoreductase activity"/>
    <property type="evidence" value="ECO:0000314"/>
    <property type="project" value="UniProt"/>
</dbReference>
<dbReference type="GO" id="GO:0016218">
    <property type="term" value="F:polyketide synthase activity"/>
    <property type="evidence" value="ECO:0000314"/>
    <property type="project" value="UniProt"/>
</dbReference>
<dbReference type="GO" id="GO:0140723">
    <property type="term" value="P:patulin biosynthetic process"/>
    <property type="evidence" value="ECO:0000314"/>
    <property type="project" value="UniProt"/>
</dbReference>
<dbReference type="Gene3D" id="3.30.465.10">
    <property type="match status" value="2"/>
</dbReference>
<dbReference type="InterPro" id="IPR012951">
    <property type="entry name" value="BBE"/>
</dbReference>
<dbReference type="InterPro" id="IPR016166">
    <property type="entry name" value="FAD-bd_PCMH"/>
</dbReference>
<dbReference type="InterPro" id="IPR036318">
    <property type="entry name" value="FAD-bd_PCMH-like_sf"/>
</dbReference>
<dbReference type="InterPro" id="IPR016169">
    <property type="entry name" value="FAD-bd_PCMH_sub2"/>
</dbReference>
<dbReference type="InterPro" id="IPR050432">
    <property type="entry name" value="FAD-linked_Oxidoreductases_BP"/>
</dbReference>
<dbReference type="InterPro" id="IPR006094">
    <property type="entry name" value="Oxid_FAD_bind_N"/>
</dbReference>
<dbReference type="PANTHER" id="PTHR13878:SF91">
    <property type="entry name" value="FAD BINDING DOMAIN PROTEIN (AFU_ORTHOLOGUE AFUA_6G12070)-RELATED"/>
    <property type="match status" value="1"/>
</dbReference>
<dbReference type="PANTHER" id="PTHR13878">
    <property type="entry name" value="GULONOLACTONE OXIDASE"/>
    <property type="match status" value="1"/>
</dbReference>
<dbReference type="Pfam" id="PF08031">
    <property type="entry name" value="BBE"/>
    <property type="match status" value="1"/>
</dbReference>
<dbReference type="Pfam" id="PF01565">
    <property type="entry name" value="FAD_binding_4"/>
    <property type="match status" value="1"/>
</dbReference>
<dbReference type="SUPFAM" id="SSF56176">
    <property type="entry name" value="FAD-binding/transporter-associated domain-like"/>
    <property type="match status" value="1"/>
</dbReference>
<dbReference type="PROSITE" id="PS51387">
    <property type="entry name" value="FAD_PCMH"/>
    <property type="match status" value="1"/>
</dbReference>
<name>PATO_PENEN</name>
<protein>
    <recommendedName>
        <fullName evidence="13">FAD-linked oxidoreductase patO</fullName>
        <ecNumber evidence="15">1.-.-.-</ecNumber>
    </recommendedName>
    <alternativeName>
        <fullName evidence="13">Patulin biosynthesis cluster protein O</fullName>
    </alternativeName>
</protein>
<organism>
    <name type="scientific">Penicillium expansum</name>
    <name type="common">Blue mold rot fungus</name>
    <dbReference type="NCBI Taxonomy" id="27334"/>
    <lineage>
        <taxon>Eukaryota</taxon>
        <taxon>Fungi</taxon>
        <taxon>Dikarya</taxon>
        <taxon>Ascomycota</taxon>
        <taxon>Pezizomycotina</taxon>
        <taxon>Eurotiomycetes</taxon>
        <taxon>Eurotiomycetidae</taxon>
        <taxon>Eurotiales</taxon>
        <taxon>Aspergillaceae</taxon>
        <taxon>Penicillium</taxon>
    </lineage>
</organism>
<gene>
    <name evidence="13" type="primary">patO</name>
    <name type="ORF">PEX2_082840</name>
</gene>
<proteinExistence type="evidence at protein level"/>
<feature type="signal peptide" evidence="1">
    <location>
        <begin position="1"/>
        <end position="23"/>
    </location>
</feature>
<feature type="chain" id="PRO_5001709738" description="FAD-linked oxidoreductase patO">
    <location>
        <begin position="24"/>
        <end position="571"/>
    </location>
</feature>
<feature type="domain" description="FAD-binding PCMH-type" evidence="3">
    <location>
        <begin position="115"/>
        <end position="294"/>
    </location>
</feature>
<feature type="glycosylation site" description="N-linked (GlcNAc...) asparagine" evidence="2">
    <location>
        <position position="47"/>
    </location>
</feature>
<feature type="glycosylation site" description="N-linked (GlcNAc...) asparagine" evidence="2">
    <location>
        <position position="101"/>
    </location>
</feature>
<feature type="glycosylation site" description="N-linked (GlcNAc...) asparagine" evidence="2">
    <location>
        <position position="125"/>
    </location>
</feature>
<feature type="glycosylation site" description="N-linked (GlcNAc...) asparagine" evidence="2">
    <location>
        <position position="179"/>
    </location>
</feature>
<feature type="glycosylation site" description="N-linked (GlcNAc...) asparagine" evidence="2">
    <location>
        <position position="341"/>
    </location>
</feature>
<feature type="glycosylation site" description="N-linked (GlcNAc...) asparagine" evidence="2">
    <location>
        <position position="374"/>
    </location>
</feature>
<feature type="glycosylation site" description="N-linked (GlcNAc...) asparagine" evidence="2">
    <location>
        <position position="380"/>
    </location>
</feature>
<feature type="glycosylation site" description="N-linked (GlcNAc...) asparagine" evidence="2">
    <location>
        <position position="421"/>
    </location>
</feature>
<feature type="glycosylation site" description="N-linked (GlcNAc...) asparagine" evidence="2">
    <location>
        <position position="445"/>
    </location>
</feature>
<feature type="glycosylation site" description="N-linked (GlcNAc...) asparagine" evidence="2">
    <location>
        <position position="480"/>
    </location>
</feature>
<feature type="sequence variant" description="In strain: MD-8." evidence="7">
    <original>V</original>
    <variation>I</variation>
    <location>
        <position position="381"/>
    </location>
</feature>
<reference key="1">
    <citation type="journal article" date="2014" name="Int. J. Food Microbiol.">
        <title>Sequencing, physical organization and kinetic expression of the patulin biosynthetic gene cluster from Penicillium expansum.</title>
        <authorList>
            <person name="Tannous J."/>
            <person name="El Khoury R."/>
            <person name="Snini S.P."/>
            <person name="Lippi Y."/>
            <person name="El Khoury A."/>
            <person name="Atoui A."/>
            <person name="Lteif R."/>
            <person name="Oswald I.P."/>
            <person name="Puel O."/>
        </authorList>
    </citation>
    <scope>NUCLEOTIDE SEQUENCE [GENOMIC DNA]</scope>
    <scope>IDENTIFICATION</scope>
    <scope>INDUCTION</scope>
    <source>
        <strain>NRRL 35695</strain>
    </source>
</reference>
<reference key="2">
    <citation type="journal article" date="2015" name="Mol. Plant Microbe Interact.">
        <title>Genome, transcriptome, and functional analyses of Penicillium expansum provide new insights into secondary metabolism and pathogenicity.</title>
        <authorList>
            <person name="Ballester A.R."/>
            <person name="Marcet-Houben M."/>
            <person name="Levin E."/>
            <person name="Sela N."/>
            <person name="Selma-Lazaro C."/>
            <person name="Carmona L."/>
            <person name="Wisniewski M."/>
            <person name="Droby S."/>
            <person name="Gonzalez-Candelas L."/>
            <person name="Gabaldon T."/>
        </authorList>
    </citation>
    <scope>NUCLEOTIDE SEQUENCE [LARGE SCALE GENOMIC DNA]</scope>
    <source>
        <strain>MD-8</strain>
    </source>
</reference>
<reference key="3">
    <citation type="journal article" date="2004" name="Int. J. Epidemiol.">
        <title>Clinical trial of patulin in the common cold. 1944.</title>
        <authorList>
            <consortium name="Patulin Clinical Trials Committee, Medical Research Council"/>
        </authorList>
    </citation>
    <scope>BIOTECHNOLOGY</scope>
</reference>
<reference key="4">
    <citation type="journal article" date="2012" name="Food Chem. Toxicol.">
        <title>DNA damage in organs of mice treated acutely with patulin, a known mycotoxin.</title>
        <authorList>
            <person name="de Melo F.T."/>
            <person name="de Oliveira I.M."/>
            <person name="Greggio S."/>
            <person name="Dacosta J.C."/>
            <person name="Guecheva T.N."/>
            <person name="Saffi J."/>
            <person name="Henriques J.A."/>
            <person name="Rosa R.M."/>
        </authorList>
    </citation>
    <scope>BIOTECHNOLOGY</scope>
</reference>
<reference key="5">
    <citation type="journal article" date="2016" name="Tumor Biol.">
        <title>The potential effect of patulin on mice bearing melanoma cells: an anti-tumour or carcinogenic effect?</title>
        <authorList>
            <person name="Boussabbeh M."/>
            <person name="Ben Salem I."/>
            <person name="Rjiba-Touati K."/>
            <person name="Bouyahya C."/>
            <person name="Neffati F."/>
            <person name="Najjar M.F."/>
            <person name="Bacha H."/>
            <person name="Abid-Essefi S."/>
        </authorList>
    </citation>
    <scope>BIOTECHNOLOGY</scope>
</reference>
<reference key="6">
    <citation type="journal article" date="2017" name="Mol. Plant Pathol.">
        <title>LaeA regulation of secondary metabolism modulates virulence in Penicillium expansum and is mediated by sucrose.</title>
        <authorList>
            <person name="Kumar D."/>
            <person name="Barad S."/>
            <person name="Chen Y."/>
            <person name="Luo X."/>
            <person name="Tannous J."/>
            <person name="Dubey A."/>
            <person name="Glam Matana N."/>
            <person name="Tian S."/>
            <person name="Li B."/>
            <person name="Keller N."/>
            <person name="Prusky D."/>
        </authorList>
    </citation>
    <scope>INDUCTION</scope>
</reference>
<reference key="7">
    <citation type="journal article" date="2018" name="Front. Plant Sci.">
        <title>Apple intrinsic factors modulating the global regulator, LaeA, the patulin gene cluster and patulin accumulation during fruit colonization by Penicillium expansum.</title>
        <authorList>
            <person name="Kumar D."/>
            <person name="Tannous J."/>
            <person name="Sionov E."/>
            <person name="Keller N."/>
            <person name="Prusky D."/>
        </authorList>
    </citation>
    <scope>FUNCTION</scope>
    <scope>INDUCTION</scope>
</reference>
<reference key="8">
    <citation type="journal article" date="2015" name="Mol. Plant Microbe Interact.">
        <title>Genomic characterization reveals insights into patulin biosynthesis and pathogenicity in Penicillium species.</title>
        <authorList>
            <person name="Li B."/>
            <person name="Zong Y."/>
            <person name="Du Z."/>
            <person name="Chen Y."/>
            <person name="Zhang Z."/>
            <person name="Qin G."/>
            <person name="Zhao W."/>
            <person name="Tian S."/>
        </authorList>
    </citation>
    <scope>FUNCTION</scope>
    <scope>INDUCTION</scope>
</reference>
<reference key="9">
    <citation type="journal article" date="2019" name="Environ. Microbiol.">
        <title>Dissection of patulin biosynthesis, spatial control and regulation mechanism in Penicillium expansum.</title>
        <authorList>
            <person name="Li B."/>
            <person name="Chen Y."/>
            <person name="Zong Y."/>
            <person name="Shang Y."/>
            <person name="Zhang Z."/>
            <person name="Xu X."/>
            <person name="Wang X."/>
            <person name="Long M."/>
            <person name="Tian S."/>
        </authorList>
    </citation>
    <scope>FUNCTION</scope>
    <scope>DISRUPTION PHENOTYPE</scope>
    <scope>SUBCELLULAR LOCATION</scope>
    <scope>INDUCTION</scope>
    <scope>PATHWAY</scope>
</reference>
<comment type="function">
    <text evidence="8 11 12 15">FAD-linked oxidoreductase; part of the gene cluster that mediates the biosynthesis of patulin, an acetate-derived tetraketide mycotoxin produced by several fungal species that shows antimicrobial properties against several bacteria (PubMed:25625822, PubMed:30100914, PubMed:30680886). PatO acts with patJ in the vacuole to convert gentisyl alcohol to isoepoxydon (PubMed:30680886). The pathway begins with the synthesis of 6-methylsalicylic acid by the polyketide synthase (PKS) patK via condensation of acetate and malonate units. The 6-methylsalicylic acid decarboxylase patG then catalyzes the decarboxylation of 6-methylsalicylic acid to yield m-cresol (also known as 3-methylphenol). These first reactions occur in the cytosol. The intermediate m-cresol is then transported into the endoplasmic reticulum where the cytochrome P450 monooxygenase patH converts it to m-hydroxybenzyl alcohol, which is further converted to gentisyl alcohol by the cytochrome P450 monooxygenase patI. The oxidoreductases patJ and patO further convert gentisyl alcohol to isoepoxydon in the vacuole. PatN catalyzes then the transformation of isoepoxydon into phyllostine. The cluster protein patF is responsible for the conversion from phyllostine to neopatulin whereas the alcohol dehydrogenase patD converts neopatulin to E-ascladiol. The steps between isoepoxydon and E-ascladiol occur in the cytosol, and E-ascladiol is probably secreted to the extracellular space by one of the cluster-specific transporters patC or patM. Finally, the secreted patulin synthase patE catalyzes the conversion of E-ascladiol to patulin (Probable) (PubMed:30680886).</text>
</comment>
<comment type="cofactor">
    <cofactor evidence="14">
        <name>FAD</name>
        <dbReference type="ChEBI" id="CHEBI:57692"/>
    </cofactor>
</comment>
<comment type="pathway">
    <text evidence="12">Mycotoxin biosynthesis; patulin biosynthesis.</text>
</comment>
<comment type="subcellular location">
    <subcellularLocation>
        <location evidence="12">Vacuole lumen</location>
    </subcellularLocation>
</comment>
<comment type="induction">
    <text evidence="6 8 10 11 12">Expression is correlated with the production of patulin (PubMed:25120234). Expression is positively regulated by the secondary metabolism regulator laeA (PubMed:27528575, PubMed:30100914). Expression is strongly decreased with increased sucrose concentrations. This decrease is lost in the presence of malic acid (PubMed:30100914). Expression is increased with pH changes from 2.5 to 3.5 in the presence of a limiting concentration of sucrose, 50 mM (PubMed:30100914). Natural phenols present in apple fruits such as chlorogenic acid or the flavonoid epicatechin modulate patulin biosynthesis. They increase expression in the absence of sucrose, have little impact in the presence of 15 mM sucrose, and decrease expression in 175 mM sucrose (PubMed:30100914). Expression is positively regulated by the patulin cluster-specific transcription factor patL (PubMed:25625822). Finally, expression is also positively regulated by the velvet family proteins transcription regulators veA, velB, velC, but not vosA (PubMed:30680886).</text>
</comment>
<comment type="disruption phenotype">
    <text evidence="12">Strongly reduces the production of patulin and leads to the production of a distinct dark-red pigment.</text>
</comment>
<comment type="biotechnology">
    <text evidence="4 5 9">Patulin was originally used as an antibiotic and specifically trialed to be used against the common cold, but it is no longer used for that purpose since it has been shown to induce immunological, neurological and gastrointestinal effects (PubMed:15082620). Genotoxic effects of patulin with dose-dependent increase in DNA strand breaks in brain, liver and kidneys have been detected in mice (PubMed:22222931). However, more recently, it has been proposed that patulin might also have anti-tumor properties (PubMed:26619846).</text>
</comment>
<comment type="similarity">
    <text evidence="14">Belongs to the oxygen-dependent FAD-linked oxidoreductase family.</text>
</comment>
<comment type="sequence caution" evidence="14">
    <conflict type="erroneous initiation">
        <sequence resource="EMBL-CDS" id="KGO52637"/>
    </conflict>
    <text>Truncated N-terminus.</text>
</comment>
<evidence type="ECO:0000255" key="1"/>
<evidence type="ECO:0000255" key="2">
    <source>
        <dbReference type="PROSITE-ProRule" id="PRU00498"/>
    </source>
</evidence>
<evidence type="ECO:0000255" key="3">
    <source>
        <dbReference type="PROSITE-ProRule" id="PRU00718"/>
    </source>
</evidence>
<evidence type="ECO:0000269" key="4">
    <source>
    </source>
</evidence>
<evidence type="ECO:0000269" key="5">
    <source>
    </source>
</evidence>
<evidence type="ECO:0000269" key="6">
    <source>
    </source>
</evidence>
<evidence type="ECO:0000269" key="7">
    <source>
    </source>
</evidence>
<evidence type="ECO:0000269" key="8">
    <source>
    </source>
</evidence>
<evidence type="ECO:0000269" key="9">
    <source>
    </source>
</evidence>
<evidence type="ECO:0000269" key="10">
    <source>
    </source>
</evidence>
<evidence type="ECO:0000269" key="11">
    <source>
    </source>
</evidence>
<evidence type="ECO:0000269" key="12">
    <source>
    </source>
</evidence>
<evidence type="ECO:0000303" key="13">
    <source>
    </source>
</evidence>
<evidence type="ECO:0000305" key="14"/>
<evidence type="ECO:0000305" key="15">
    <source>
    </source>
</evidence>
<sequence length="571" mass="61945">MRLHQSPPRLLVCILSVLQVSAGLSSNCRCMPGDSCWPSLNDWARFNTSIGGRLVDTQPLGQPCHDPFYTASECNELKQQWTHPELHDASSSSIMSAAVANETCDAFTPRSKPCTLGAMVRYAVNASSPDDFVQTIRFSQERNIRLVIRNTGHDYAGKSTGAGALSIWTHSLKEIDFLNYTSAHYTGPAVRMTAGIQGTDINPAAHKKGLVIVGGECATVGPVGGFTQGGGHSALSSRFGLAADQVLEWEVVDGMGRLLTASPTQNPDLYWALSGGGGGTFGVVYAVTVKTFPDFAVTGVVLQFENIDPSSNRFFEAVGHYHRHLPTYTSAGGMAIAQITNSSFLLTPLTLPAYTAAATKKLLGPFLQDLHQLNISYTLNVTESASYFQHYMKLIEPNPTQLVQNAQYGGRLLPLDLIERNNSQLTDAVQKLTADGVTFVGIGLNVSSSVTGDIWNSVLPGWRTAAMTVILTTSWPLGANLTKMKILADKMTTKWVPILTALSPESGCYMSEADPQQPDWKQTFYGRNYDSLYAIKTKYDPLQTFYATTAVGSEDWQVEAGGRLCQATRKN</sequence>